<evidence type="ECO:0000255" key="1">
    <source>
        <dbReference type="HAMAP-Rule" id="MF_00291"/>
    </source>
</evidence>
<evidence type="ECO:0000305" key="2"/>
<protein>
    <recommendedName>
        <fullName evidence="1">Small ribosomal subunit protein uS2</fullName>
    </recommendedName>
    <alternativeName>
        <fullName evidence="2">30S ribosomal protein S2</fullName>
    </alternativeName>
</protein>
<organism>
    <name type="scientific">Brucella melitensis biotype 2 (strain ATCC 23457)</name>
    <dbReference type="NCBI Taxonomy" id="546272"/>
    <lineage>
        <taxon>Bacteria</taxon>
        <taxon>Pseudomonadati</taxon>
        <taxon>Pseudomonadota</taxon>
        <taxon>Alphaproteobacteria</taxon>
        <taxon>Hyphomicrobiales</taxon>
        <taxon>Brucellaceae</taxon>
        <taxon>Brucella/Ochrobactrum group</taxon>
        <taxon>Brucella</taxon>
    </lineage>
</organism>
<dbReference type="EMBL" id="CP001488">
    <property type="protein sequence ID" value="ACO00938.1"/>
    <property type="molecule type" value="Genomic_DNA"/>
</dbReference>
<dbReference type="RefSeq" id="WP_002964289.1">
    <property type="nucleotide sequence ID" value="NC_012441.1"/>
</dbReference>
<dbReference type="SMR" id="C0RJD0"/>
<dbReference type="GeneID" id="97533588"/>
<dbReference type="KEGG" id="bmi:BMEA_A1205"/>
<dbReference type="HOGENOM" id="CLU_040318_2_1_5"/>
<dbReference type="Proteomes" id="UP000001748">
    <property type="component" value="Chromosome I"/>
</dbReference>
<dbReference type="GO" id="GO:0022627">
    <property type="term" value="C:cytosolic small ribosomal subunit"/>
    <property type="evidence" value="ECO:0007669"/>
    <property type="project" value="TreeGrafter"/>
</dbReference>
<dbReference type="GO" id="GO:0003735">
    <property type="term" value="F:structural constituent of ribosome"/>
    <property type="evidence" value="ECO:0007669"/>
    <property type="project" value="InterPro"/>
</dbReference>
<dbReference type="GO" id="GO:0006412">
    <property type="term" value="P:translation"/>
    <property type="evidence" value="ECO:0007669"/>
    <property type="project" value="UniProtKB-UniRule"/>
</dbReference>
<dbReference type="CDD" id="cd01425">
    <property type="entry name" value="RPS2"/>
    <property type="match status" value="1"/>
</dbReference>
<dbReference type="FunFam" id="1.10.287.610:FF:000001">
    <property type="entry name" value="30S ribosomal protein S2"/>
    <property type="match status" value="1"/>
</dbReference>
<dbReference type="Gene3D" id="3.40.50.10490">
    <property type="entry name" value="Glucose-6-phosphate isomerase like protein, domain 1"/>
    <property type="match status" value="1"/>
</dbReference>
<dbReference type="Gene3D" id="1.10.287.610">
    <property type="entry name" value="Helix hairpin bin"/>
    <property type="match status" value="1"/>
</dbReference>
<dbReference type="HAMAP" id="MF_00291_B">
    <property type="entry name" value="Ribosomal_uS2_B"/>
    <property type="match status" value="1"/>
</dbReference>
<dbReference type="InterPro" id="IPR001865">
    <property type="entry name" value="Ribosomal_uS2"/>
</dbReference>
<dbReference type="InterPro" id="IPR005706">
    <property type="entry name" value="Ribosomal_uS2_bac/mit/plastid"/>
</dbReference>
<dbReference type="InterPro" id="IPR018130">
    <property type="entry name" value="Ribosomal_uS2_CS"/>
</dbReference>
<dbReference type="InterPro" id="IPR023591">
    <property type="entry name" value="Ribosomal_uS2_flav_dom_sf"/>
</dbReference>
<dbReference type="NCBIfam" id="TIGR01011">
    <property type="entry name" value="rpsB_bact"/>
    <property type="match status" value="1"/>
</dbReference>
<dbReference type="PANTHER" id="PTHR12534">
    <property type="entry name" value="30S RIBOSOMAL PROTEIN S2 PROKARYOTIC AND ORGANELLAR"/>
    <property type="match status" value="1"/>
</dbReference>
<dbReference type="PANTHER" id="PTHR12534:SF0">
    <property type="entry name" value="SMALL RIBOSOMAL SUBUNIT PROTEIN US2M"/>
    <property type="match status" value="1"/>
</dbReference>
<dbReference type="Pfam" id="PF00318">
    <property type="entry name" value="Ribosomal_S2"/>
    <property type="match status" value="1"/>
</dbReference>
<dbReference type="PRINTS" id="PR00395">
    <property type="entry name" value="RIBOSOMALS2"/>
</dbReference>
<dbReference type="SUPFAM" id="SSF52313">
    <property type="entry name" value="Ribosomal protein S2"/>
    <property type="match status" value="1"/>
</dbReference>
<dbReference type="PROSITE" id="PS00962">
    <property type="entry name" value="RIBOSOMAL_S2_1"/>
    <property type="match status" value="1"/>
</dbReference>
<dbReference type="PROSITE" id="PS00963">
    <property type="entry name" value="RIBOSOMAL_S2_2"/>
    <property type="match status" value="1"/>
</dbReference>
<sequence length="256" mass="27999">MALPDFSMRQLLEAGVHFGHQTHRWNPKMAPFIYGERNNIHILDLSQTVPLLNSALKVVSDTVARGGRVLFVGTKRQASDIIADAANRSAQYYVNARWLGGMMTNWKTISNSIQRLRKLDELLAGEAQGFTKKERLNLEREREKLDRALGGIKDMGSVPDLMFIIDTNKEAIAIQEAKRLGIPVVAVIDSNCDPDQIDYPIPGNDDAARAIALYCDLIARAALDGIARQQGAMGIDVGAQVEAPVEPALQAPAEGA</sequence>
<name>RS2_BRUMB</name>
<comment type="similarity">
    <text evidence="1">Belongs to the universal ribosomal protein uS2 family.</text>
</comment>
<reference key="1">
    <citation type="submission" date="2009-03" db="EMBL/GenBank/DDBJ databases">
        <title>Brucella melitensis ATCC 23457 whole genome shotgun sequencing project.</title>
        <authorList>
            <person name="Setubal J.C."/>
            <person name="Boyle S."/>
            <person name="Crasta O.R."/>
            <person name="Gillespie J.J."/>
            <person name="Kenyon R.W."/>
            <person name="Lu J."/>
            <person name="Mane S."/>
            <person name="Nagrani S."/>
            <person name="Shallom J.M."/>
            <person name="Shallom S."/>
            <person name="Shukla M."/>
            <person name="Snyder E.E."/>
            <person name="Sobral B.W."/>
            <person name="Wattam A.R."/>
            <person name="Will R."/>
            <person name="Williams K."/>
            <person name="Yoo H."/>
            <person name="Munk C."/>
            <person name="Tapia R."/>
            <person name="Han C."/>
            <person name="Detter J.C."/>
            <person name="Bruce D."/>
            <person name="Brettin T.S."/>
        </authorList>
    </citation>
    <scope>NUCLEOTIDE SEQUENCE [LARGE SCALE GENOMIC DNA]</scope>
    <source>
        <strain>ATCC 23457</strain>
    </source>
</reference>
<accession>C0RJD0</accession>
<proteinExistence type="inferred from homology"/>
<gene>
    <name evidence="1" type="primary">rpsB</name>
    <name type="ordered locus">BMEA_A1205</name>
</gene>
<feature type="chain" id="PRO_1000194323" description="Small ribosomal subunit protein uS2">
    <location>
        <begin position="1"/>
        <end position="256"/>
    </location>
</feature>
<keyword id="KW-0687">Ribonucleoprotein</keyword>
<keyword id="KW-0689">Ribosomal protein</keyword>